<sequence>MAYFNQHQSMISKRYLTFFSKSKKKKPFSAGQLIGLILGPLLFLLTLLFFHPQDLPWEGVYVLAITLWIATWWITEAIPIAATSLLPIVLLPLGHILTPEQVSSEYGNDIIFLFLGGFILAIAMERWNLHTRVALTIINLIGASTSKILLGFMVATGFLSMFVSNTAAVMIMIPIGLAIIKEAHDLQEANTNQTSIQKFEKSLVLAIGYAGTIGGLGTLIGTPPLIILKGQYMQHFGHEISFAKWMIVGIPTVIVLLGITWLYLRYVAFRHDLKYLPGGQTLIKQKLDELGKMKYEEKVVQTIFVLASLLWITREFLLKKWEVTSSVADGTIAIFISILLFVIPAKNTEKHRRIIDWEVAKELPWGVLILFGGGLALAKGISESGLAKWLGEQLKSLNGVSPILIVIVITIFVLFLTEVTSNTATATMILPILATLSVAVGVHPLLLMAPAAMAANCAYMLPVGTPPNAIIFGSGKISIKQMASVGFWVNLISAIIIILVVYYVMPIVLGIDINQPLPLK</sequence>
<protein>
    <recommendedName>
        <fullName>Sodium-dependent dicarboxylate transporter SdcS</fullName>
    </recommendedName>
    <alternativeName>
        <fullName>Na(+)/dicarboxylate symporter</fullName>
    </alternativeName>
</protein>
<reference key="1">
    <citation type="journal article" date="2007" name="PLoS ONE">
        <title>Molecular correlates of host specialization in Staphylococcus aureus.</title>
        <authorList>
            <person name="Herron-Olson L."/>
            <person name="Fitzgerald J.R."/>
            <person name="Musser J.M."/>
            <person name="Kapur V."/>
        </authorList>
    </citation>
    <scope>NUCLEOTIDE SEQUENCE [LARGE SCALE GENOMIC DNA]</scope>
    <source>
        <strain>bovine RF122 / ET3-1</strain>
    </source>
</reference>
<evidence type="ECO:0000250" key="1"/>
<evidence type="ECO:0000255" key="2"/>
<evidence type="ECO:0000305" key="3"/>
<name>SDCS_STAAB</name>
<dbReference type="EMBL" id="AJ938182">
    <property type="protein sequence ID" value="CAI81542.1"/>
    <property type="molecule type" value="Genomic_DNA"/>
</dbReference>
<dbReference type="RefSeq" id="WP_000323150.1">
    <property type="nucleotide sequence ID" value="NC_007622.1"/>
</dbReference>
<dbReference type="SMR" id="Q2YU56"/>
<dbReference type="KEGG" id="sab:SAB1853c"/>
<dbReference type="HOGENOM" id="CLU_005170_0_0_9"/>
<dbReference type="GO" id="GO:0005886">
    <property type="term" value="C:plasma membrane"/>
    <property type="evidence" value="ECO:0007669"/>
    <property type="project" value="UniProtKB-SubCell"/>
</dbReference>
<dbReference type="GO" id="GO:0008514">
    <property type="term" value="F:organic anion transmembrane transporter activity"/>
    <property type="evidence" value="ECO:0007669"/>
    <property type="project" value="UniProtKB-ARBA"/>
</dbReference>
<dbReference type="GO" id="GO:0015293">
    <property type="term" value="F:symporter activity"/>
    <property type="evidence" value="ECO:0007669"/>
    <property type="project" value="UniProtKB-KW"/>
</dbReference>
<dbReference type="GO" id="GO:1905039">
    <property type="term" value="P:carboxylic acid transmembrane transport"/>
    <property type="evidence" value="ECO:0007669"/>
    <property type="project" value="UniProtKB-ARBA"/>
</dbReference>
<dbReference type="GO" id="GO:0006814">
    <property type="term" value="P:sodium ion transport"/>
    <property type="evidence" value="ECO:0007669"/>
    <property type="project" value="UniProtKB-KW"/>
</dbReference>
<dbReference type="CDD" id="cd01115">
    <property type="entry name" value="SLC13_permease"/>
    <property type="match status" value="1"/>
</dbReference>
<dbReference type="InterPro" id="IPR001898">
    <property type="entry name" value="SLC13A/DASS"/>
</dbReference>
<dbReference type="NCBIfam" id="TIGR00785">
    <property type="entry name" value="dass"/>
    <property type="match status" value="1"/>
</dbReference>
<dbReference type="PANTHER" id="PTHR10283">
    <property type="entry name" value="SOLUTE CARRIER FAMILY 13 MEMBER"/>
    <property type="match status" value="1"/>
</dbReference>
<dbReference type="PANTHER" id="PTHR10283:SF82">
    <property type="entry name" value="SOLUTE CARRIER FAMILY 13 MEMBER 2"/>
    <property type="match status" value="1"/>
</dbReference>
<dbReference type="Pfam" id="PF00939">
    <property type="entry name" value="Na_sulph_symp"/>
    <property type="match status" value="1"/>
</dbReference>
<feature type="chain" id="PRO_0000260091" description="Sodium-dependent dicarboxylate transporter SdcS">
    <location>
        <begin position="1"/>
        <end position="520"/>
    </location>
</feature>
<feature type="transmembrane region" description="Helical" evidence="2">
    <location>
        <begin position="30"/>
        <end position="50"/>
    </location>
</feature>
<feature type="transmembrane region" description="Helical" evidence="2">
    <location>
        <begin position="55"/>
        <end position="75"/>
    </location>
</feature>
<feature type="transmembrane region" description="Helical" evidence="2">
    <location>
        <begin position="77"/>
        <end position="97"/>
    </location>
</feature>
<feature type="transmembrane region" description="Helical" evidence="2">
    <location>
        <begin position="104"/>
        <end position="124"/>
    </location>
</feature>
<feature type="transmembrane region" description="Helical" evidence="2">
    <location>
        <begin position="160"/>
        <end position="180"/>
    </location>
</feature>
<feature type="transmembrane region" description="Helical" evidence="2">
    <location>
        <begin position="207"/>
        <end position="227"/>
    </location>
</feature>
<feature type="transmembrane region" description="Helical" evidence="2">
    <location>
        <begin position="242"/>
        <end position="262"/>
    </location>
</feature>
<feature type="transmembrane region" description="Helical" evidence="2">
    <location>
        <begin position="298"/>
        <end position="318"/>
    </location>
</feature>
<feature type="transmembrane region" description="Helical" evidence="2">
    <location>
        <begin position="323"/>
        <end position="343"/>
    </location>
</feature>
<feature type="transmembrane region" description="Helical" evidence="2">
    <location>
        <begin position="362"/>
        <end position="382"/>
    </location>
</feature>
<feature type="transmembrane region" description="Helical" evidence="2">
    <location>
        <begin position="399"/>
        <end position="419"/>
    </location>
</feature>
<feature type="transmembrane region" description="Helical" evidence="2">
    <location>
        <begin position="428"/>
        <end position="448"/>
    </location>
</feature>
<feature type="transmembrane region" description="Helical" evidence="2">
    <location>
        <begin position="452"/>
        <end position="472"/>
    </location>
</feature>
<feature type="transmembrane region" description="Helical" evidence="2">
    <location>
        <begin position="491"/>
        <end position="511"/>
    </location>
</feature>
<organism>
    <name type="scientific">Staphylococcus aureus (strain bovine RF122 / ET3-1)</name>
    <dbReference type="NCBI Taxonomy" id="273036"/>
    <lineage>
        <taxon>Bacteria</taxon>
        <taxon>Bacillati</taxon>
        <taxon>Bacillota</taxon>
        <taxon>Bacilli</taxon>
        <taxon>Bacillales</taxon>
        <taxon>Staphylococcaceae</taxon>
        <taxon>Staphylococcus</taxon>
    </lineage>
</organism>
<comment type="function">
    <text evidence="1">Mediates the transport of the dicarboxylates fumarate, malate, and succinate across the cytoplasmic membrane via a Na(+)-electrochemical gradient.</text>
</comment>
<comment type="subcellular location">
    <subcellularLocation>
        <location evidence="3">Cell membrane</location>
        <topology evidence="3">Multi-pass membrane protein</topology>
    </subcellularLocation>
</comment>
<comment type="similarity">
    <text evidence="3">Belongs to the SLC13A/DASS transporter (TC 2.A.47) family. NADC subfamily.</text>
</comment>
<accession>Q2YU56</accession>
<gene>
    <name type="primary">sdcS</name>
    <name type="ordered locus">SAB1853c</name>
</gene>
<proteinExistence type="inferred from homology"/>
<keyword id="KW-1003">Cell membrane</keyword>
<keyword id="KW-0406">Ion transport</keyword>
<keyword id="KW-0472">Membrane</keyword>
<keyword id="KW-0915">Sodium</keyword>
<keyword id="KW-0739">Sodium transport</keyword>
<keyword id="KW-0769">Symport</keyword>
<keyword id="KW-0812">Transmembrane</keyword>
<keyword id="KW-1133">Transmembrane helix</keyword>
<keyword id="KW-0813">Transport</keyword>